<sequence>MSIHIAAQQGEIADKILLPGDPLRAKFIAENFLDDAVCFNEVRNMFGYTGTYKGHCVSVMGTGMGMPSISIYARELIVDYGVKKLIRVGTAGSLNEEVHVRELVLAQAAATNSNIVRNDWPQYDFPQIASFDLLDKAYHIAKKLGMTTHVGNVLSSDVFYSNYFEKNIELGKWGVKAVEMEAAALYYLAAQYHVDALAIMTISDSLVNPDEDTTAEERQNTFTDMMKVGLETLIAE</sequence>
<accession>C1CS55</accession>
<organism>
    <name type="scientific">Streptococcus pneumoniae (strain Taiwan19F-14)</name>
    <dbReference type="NCBI Taxonomy" id="487213"/>
    <lineage>
        <taxon>Bacteria</taxon>
        <taxon>Bacillati</taxon>
        <taxon>Bacillota</taxon>
        <taxon>Bacilli</taxon>
        <taxon>Lactobacillales</taxon>
        <taxon>Streptococcaceae</taxon>
        <taxon>Streptococcus</taxon>
    </lineage>
</organism>
<gene>
    <name evidence="2" type="primary">deoD</name>
    <name type="ordered locus">SPT_1367</name>
</gene>
<reference key="1">
    <citation type="journal article" date="2010" name="Genome Biol.">
        <title>Structure and dynamics of the pan-genome of Streptococcus pneumoniae and closely related species.</title>
        <authorList>
            <person name="Donati C."/>
            <person name="Hiller N.L."/>
            <person name="Tettelin H."/>
            <person name="Muzzi A."/>
            <person name="Croucher N.J."/>
            <person name="Angiuoli S.V."/>
            <person name="Oggioni M."/>
            <person name="Dunning Hotopp J.C."/>
            <person name="Hu F.Z."/>
            <person name="Riley D.R."/>
            <person name="Covacci A."/>
            <person name="Mitchell T.J."/>
            <person name="Bentley S.D."/>
            <person name="Kilian M."/>
            <person name="Ehrlich G.D."/>
            <person name="Rappuoli R."/>
            <person name="Moxon E.R."/>
            <person name="Masignani V."/>
        </authorList>
    </citation>
    <scope>NUCLEOTIDE SEQUENCE [LARGE SCALE GENOMIC DNA]</scope>
    <source>
        <strain>Taiwan19F-14</strain>
    </source>
</reference>
<keyword id="KW-0328">Glycosyltransferase</keyword>
<keyword id="KW-0808">Transferase</keyword>
<comment type="function">
    <text evidence="2">Catalyzes the reversible phosphorolytic breakdown of the N-glycosidic bond in the beta-(deoxy)ribonucleoside molecules, with the formation of the corresponding free purine bases and pentose-1-phosphate.</text>
</comment>
<comment type="catalytic activity">
    <reaction evidence="2">
        <text>a purine D-ribonucleoside + phosphate = a purine nucleobase + alpha-D-ribose 1-phosphate</text>
        <dbReference type="Rhea" id="RHEA:19805"/>
        <dbReference type="ChEBI" id="CHEBI:26386"/>
        <dbReference type="ChEBI" id="CHEBI:43474"/>
        <dbReference type="ChEBI" id="CHEBI:57720"/>
        <dbReference type="ChEBI" id="CHEBI:142355"/>
        <dbReference type="EC" id="2.4.2.1"/>
    </reaction>
</comment>
<comment type="catalytic activity">
    <reaction evidence="2">
        <text>a purine 2'-deoxy-D-ribonucleoside + phosphate = a purine nucleobase + 2-deoxy-alpha-D-ribose 1-phosphate</text>
        <dbReference type="Rhea" id="RHEA:36431"/>
        <dbReference type="ChEBI" id="CHEBI:26386"/>
        <dbReference type="ChEBI" id="CHEBI:43474"/>
        <dbReference type="ChEBI" id="CHEBI:57259"/>
        <dbReference type="ChEBI" id="CHEBI:142361"/>
        <dbReference type="EC" id="2.4.2.1"/>
    </reaction>
</comment>
<comment type="subunit">
    <text evidence="2">Homohexamer; trimer of homodimers.</text>
</comment>
<comment type="similarity">
    <text evidence="2">Belongs to the PNP/UDP phosphorylase family.</text>
</comment>
<proteinExistence type="inferred from homology"/>
<name>DEOD_STRZT</name>
<protein>
    <recommendedName>
        <fullName evidence="2">Purine nucleoside phosphorylase DeoD-type</fullName>
        <shortName evidence="2">PNP</shortName>
        <ecNumber evidence="2">2.4.2.1</ecNumber>
    </recommendedName>
</protein>
<dbReference type="EC" id="2.4.2.1" evidence="2"/>
<dbReference type="EMBL" id="CP000921">
    <property type="protein sequence ID" value="ACO24194.1"/>
    <property type="molecule type" value="Genomic_DNA"/>
</dbReference>
<dbReference type="RefSeq" id="WP_000022084.1">
    <property type="nucleotide sequence ID" value="NC_012469.1"/>
</dbReference>
<dbReference type="SMR" id="C1CS55"/>
<dbReference type="KEGG" id="snt:SPT_1367"/>
<dbReference type="HOGENOM" id="CLU_068457_2_0_9"/>
<dbReference type="GO" id="GO:0005829">
    <property type="term" value="C:cytosol"/>
    <property type="evidence" value="ECO:0007669"/>
    <property type="project" value="TreeGrafter"/>
</dbReference>
<dbReference type="GO" id="GO:0004731">
    <property type="term" value="F:purine-nucleoside phosphorylase activity"/>
    <property type="evidence" value="ECO:0007669"/>
    <property type="project" value="UniProtKB-UniRule"/>
</dbReference>
<dbReference type="GO" id="GO:0006152">
    <property type="term" value="P:purine nucleoside catabolic process"/>
    <property type="evidence" value="ECO:0007669"/>
    <property type="project" value="TreeGrafter"/>
</dbReference>
<dbReference type="CDD" id="cd09006">
    <property type="entry name" value="PNP_EcPNPI-like"/>
    <property type="match status" value="1"/>
</dbReference>
<dbReference type="Gene3D" id="3.40.50.1580">
    <property type="entry name" value="Nucleoside phosphorylase domain"/>
    <property type="match status" value="1"/>
</dbReference>
<dbReference type="HAMAP" id="MF_01627">
    <property type="entry name" value="Pur_nucleosid_phosp"/>
    <property type="match status" value="1"/>
</dbReference>
<dbReference type="InterPro" id="IPR004402">
    <property type="entry name" value="DeoD-type"/>
</dbReference>
<dbReference type="InterPro" id="IPR018016">
    <property type="entry name" value="Nucleoside_phosphorylase_CS"/>
</dbReference>
<dbReference type="InterPro" id="IPR000845">
    <property type="entry name" value="Nucleoside_phosphorylase_d"/>
</dbReference>
<dbReference type="InterPro" id="IPR035994">
    <property type="entry name" value="Nucleoside_phosphorylase_sf"/>
</dbReference>
<dbReference type="NCBIfam" id="TIGR00107">
    <property type="entry name" value="deoD"/>
    <property type="match status" value="1"/>
</dbReference>
<dbReference type="NCBIfam" id="NF004489">
    <property type="entry name" value="PRK05819.1"/>
    <property type="match status" value="1"/>
</dbReference>
<dbReference type="PANTHER" id="PTHR43691:SF11">
    <property type="entry name" value="FI09636P-RELATED"/>
    <property type="match status" value="1"/>
</dbReference>
<dbReference type="PANTHER" id="PTHR43691">
    <property type="entry name" value="URIDINE PHOSPHORYLASE"/>
    <property type="match status" value="1"/>
</dbReference>
<dbReference type="Pfam" id="PF01048">
    <property type="entry name" value="PNP_UDP_1"/>
    <property type="match status" value="1"/>
</dbReference>
<dbReference type="SUPFAM" id="SSF53167">
    <property type="entry name" value="Purine and uridine phosphorylases"/>
    <property type="match status" value="1"/>
</dbReference>
<dbReference type="PROSITE" id="PS01232">
    <property type="entry name" value="PNP_UDP_1"/>
    <property type="match status" value="1"/>
</dbReference>
<evidence type="ECO:0000250" key="1">
    <source>
        <dbReference type="UniProtKB" id="P50389"/>
    </source>
</evidence>
<evidence type="ECO:0000255" key="2">
    <source>
        <dbReference type="HAMAP-Rule" id="MF_01627"/>
    </source>
</evidence>
<feature type="chain" id="PRO_1000186240" description="Purine nucleoside phosphorylase DeoD-type">
    <location>
        <begin position="1"/>
        <end position="236"/>
    </location>
</feature>
<feature type="active site" description="Proton donor" evidence="2">
    <location>
        <position position="204"/>
    </location>
</feature>
<feature type="binding site" evidence="1">
    <location>
        <position position="4"/>
    </location>
    <ligand>
        <name>a purine D-ribonucleoside</name>
        <dbReference type="ChEBI" id="CHEBI:142355"/>
        <note>ligand shared between dimeric partners</note>
    </ligand>
</feature>
<feature type="binding site" description="in other chain" evidence="1">
    <location>
        <position position="20"/>
    </location>
    <ligand>
        <name>phosphate</name>
        <dbReference type="ChEBI" id="CHEBI:43474"/>
        <note>ligand shared between dimeric partners</note>
    </ligand>
</feature>
<feature type="binding site" description="in other chain" evidence="1">
    <location>
        <position position="24"/>
    </location>
    <ligand>
        <name>phosphate</name>
        <dbReference type="ChEBI" id="CHEBI:43474"/>
        <note>ligand shared between dimeric partners</note>
    </ligand>
</feature>
<feature type="binding site" evidence="1">
    <location>
        <position position="43"/>
    </location>
    <ligand>
        <name>phosphate</name>
        <dbReference type="ChEBI" id="CHEBI:43474"/>
        <note>ligand shared between dimeric partners</note>
    </ligand>
</feature>
<feature type="binding site" description="in other chain" evidence="1">
    <location>
        <begin position="87"/>
        <end position="90"/>
    </location>
    <ligand>
        <name>phosphate</name>
        <dbReference type="ChEBI" id="CHEBI:43474"/>
        <note>ligand shared between dimeric partners</note>
    </ligand>
</feature>
<feature type="binding site" description="in other chain" evidence="1">
    <location>
        <begin position="179"/>
        <end position="181"/>
    </location>
    <ligand>
        <name>a purine D-ribonucleoside</name>
        <dbReference type="ChEBI" id="CHEBI:142355"/>
        <note>ligand shared between dimeric partners</note>
    </ligand>
</feature>
<feature type="binding site" description="in other chain" evidence="1">
    <location>
        <begin position="203"/>
        <end position="204"/>
    </location>
    <ligand>
        <name>a purine D-ribonucleoside</name>
        <dbReference type="ChEBI" id="CHEBI:142355"/>
        <note>ligand shared between dimeric partners</note>
    </ligand>
</feature>
<feature type="site" description="Important for catalytic activity" evidence="2">
    <location>
        <position position="218"/>
    </location>
</feature>